<name>ILVC_HALWD</name>
<evidence type="ECO:0000255" key="1">
    <source>
        <dbReference type="HAMAP-Rule" id="MF_00435"/>
    </source>
</evidence>
<evidence type="ECO:0000255" key="2">
    <source>
        <dbReference type="PROSITE-ProRule" id="PRU01197"/>
    </source>
</evidence>
<evidence type="ECO:0000255" key="3">
    <source>
        <dbReference type="PROSITE-ProRule" id="PRU01198"/>
    </source>
</evidence>
<evidence type="ECO:0000256" key="4">
    <source>
        <dbReference type="SAM" id="MobiDB-lite"/>
    </source>
</evidence>
<reference key="1">
    <citation type="journal article" date="2006" name="BMC Genomics">
        <title>The genome of the square archaeon Haloquadratum walsbyi: life at the limits of water activity.</title>
        <authorList>
            <person name="Bolhuis H."/>
            <person name="Palm P."/>
            <person name="Wende A."/>
            <person name="Falb M."/>
            <person name="Rampp M."/>
            <person name="Rodriguez-Valera F."/>
            <person name="Pfeiffer F."/>
            <person name="Oesterhelt D."/>
        </authorList>
    </citation>
    <scope>NUCLEOTIDE SEQUENCE [LARGE SCALE GENOMIC DNA]</scope>
    <source>
        <strain>DSM 16790 / HBSQ001</strain>
    </source>
</reference>
<accession>Q18GT4</accession>
<keyword id="KW-0028">Amino-acid biosynthesis</keyword>
<keyword id="KW-0100">Branched-chain amino acid biosynthesis</keyword>
<keyword id="KW-0460">Magnesium</keyword>
<keyword id="KW-0479">Metal-binding</keyword>
<keyword id="KW-0521">NADP</keyword>
<keyword id="KW-0560">Oxidoreductase</keyword>
<keyword id="KW-1185">Reference proteome</keyword>
<protein>
    <recommendedName>
        <fullName evidence="1">Ketol-acid reductoisomerase (NADP(+))</fullName>
        <shortName evidence="1">KARI</shortName>
        <ecNumber evidence="1">1.1.1.86</ecNumber>
    </recommendedName>
    <alternativeName>
        <fullName evidence="1">Acetohydroxy-acid isomeroreductase</fullName>
        <shortName evidence="1">AHIR</shortName>
    </alternativeName>
    <alternativeName>
        <fullName evidence="1">Alpha-keto-beta-hydroxylacyl reductoisomerase</fullName>
    </alternativeName>
    <alternativeName>
        <fullName evidence="1">Ketol-acid reductoisomerase type 1</fullName>
    </alternativeName>
    <alternativeName>
        <fullName evidence="1">Ketol-acid reductoisomerase type I</fullName>
    </alternativeName>
</protein>
<comment type="function">
    <text evidence="1">Involved in the biosynthesis of branched-chain amino acids (BCAA). Catalyzes an alkyl-migration followed by a ketol-acid reduction of (S)-2-acetolactate (S2AL) to yield (R)-2,3-dihydroxy-isovalerate. In the isomerase reaction, S2AL is rearranged via a Mg-dependent methyl migration to produce 3-hydroxy-3-methyl-2-ketobutyrate (HMKB). In the reductase reaction, this 2-ketoacid undergoes a metal-dependent reduction by NADPH to yield (R)-2,3-dihydroxy-isovalerate.</text>
</comment>
<comment type="catalytic activity">
    <reaction evidence="1">
        <text>(2R)-2,3-dihydroxy-3-methylbutanoate + NADP(+) = (2S)-2-acetolactate + NADPH + H(+)</text>
        <dbReference type="Rhea" id="RHEA:22068"/>
        <dbReference type="ChEBI" id="CHEBI:15378"/>
        <dbReference type="ChEBI" id="CHEBI:49072"/>
        <dbReference type="ChEBI" id="CHEBI:57783"/>
        <dbReference type="ChEBI" id="CHEBI:58349"/>
        <dbReference type="ChEBI" id="CHEBI:58476"/>
        <dbReference type="EC" id="1.1.1.86"/>
    </reaction>
</comment>
<comment type="catalytic activity">
    <reaction evidence="1">
        <text>(2R,3R)-2,3-dihydroxy-3-methylpentanoate + NADP(+) = (S)-2-ethyl-2-hydroxy-3-oxobutanoate + NADPH + H(+)</text>
        <dbReference type="Rhea" id="RHEA:13493"/>
        <dbReference type="ChEBI" id="CHEBI:15378"/>
        <dbReference type="ChEBI" id="CHEBI:49256"/>
        <dbReference type="ChEBI" id="CHEBI:49258"/>
        <dbReference type="ChEBI" id="CHEBI:57783"/>
        <dbReference type="ChEBI" id="CHEBI:58349"/>
        <dbReference type="EC" id="1.1.1.86"/>
    </reaction>
</comment>
<comment type="cofactor">
    <cofactor evidence="1">
        <name>Mg(2+)</name>
        <dbReference type="ChEBI" id="CHEBI:18420"/>
    </cofactor>
    <text evidence="1">Binds 2 magnesium ions per subunit.</text>
</comment>
<comment type="pathway">
    <text evidence="1">Amino-acid biosynthesis; L-isoleucine biosynthesis; L-isoleucine from 2-oxobutanoate: step 2/4.</text>
</comment>
<comment type="pathway">
    <text evidence="1">Amino-acid biosynthesis; L-valine biosynthesis; L-valine from pyruvate: step 2/4.</text>
</comment>
<comment type="similarity">
    <text evidence="1">Belongs to the ketol-acid reductoisomerase family.</text>
</comment>
<organism>
    <name type="scientific">Haloquadratum walsbyi (strain DSM 16790 / HBSQ001)</name>
    <dbReference type="NCBI Taxonomy" id="362976"/>
    <lineage>
        <taxon>Archaea</taxon>
        <taxon>Methanobacteriati</taxon>
        <taxon>Methanobacteriota</taxon>
        <taxon>Stenosarchaea group</taxon>
        <taxon>Halobacteria</taxon>
        <taxon>Halobacteriales</taxon>
        <taxon>Haloferacaceae</taxon>
        <taxon>Haloquadratum</taxon>
    </lineage>
</organism>
<feature type="chain" id="PRO_0000252801" description="Ketol-acid reductoisomerase (NADP(+))">
    <location>
        <begin position="1"/>
        <end position="372"/>
    </location>
</feature>
<feature type="domain" description="KARI N-terminal Rossmann" evidence="2">
    <location>
        <begin position="24"/>
        <end position="205"/>
    </location>
</feature>
<feature type="domain" description="KARI C-terminal knotted" evidence="3">
    <location>
        <begin position="206"/>
        <end position="351"/>
    </location>
</feature>
<feature type="region of interest" description="Disordered" evidence="4">
    <location>
        <begin position="1"/>
        <end position="25"/>
    </location>
</feature>
<feature type="region of interest" description="Disordered" evidence="4">
    <location>
        <begin position="351"/>
        <end position="372"/>
    </location>
</feature>
<feature type="compositionally biased region" description="Acidic residues" evidence="4">
    <location>
        <begin position="10"/>
        <end position="19"/>
    </location>
</feature>
<feature type="compositionally biased region" description="Acidic residues" evidence="4">
    <location>
        <begin position="352"/>
        <end position="372"/>
    </location>
</feature>
<feature type="active site" evidence="1">
    <location>
        <position position="131"/>
    </location>
</feature>
<feature type="binding site" evidence="1">
    <location>
        <begin position="49"/>
        <end position="52"/>
    </location>
    <ligand>
        <name>NADP(+)</name>
        <dbReference type="ChEBI" id="CHEBI:58349"/>
    </ligand>
</feature>
<feature type="binding site" evidence="1">
    <location>
        <position position="75"/>
    </location>
    <ligand>
        <name>NADP(+)</name>
        <dbReference type="ChEBI" id="CHEBI:58349"/>
    </ligand>
</feature>
<feature type="binding site" evidence="1">
    <location>
        <position position="77"/>
    </location>
    <ligand>
        <name>NADP(+)</name>
        <dbReference type="ChEBI" id="CHEBI:58349"/>
    </ligand>
</feature>
<feature type="binding site" evidence="1">
    <location>
        <begin position="107"/>
        <end position="110"/>
    </location>
    <ligand>
        <name>NADP(+)</name>
        <dbReference type="ChEBI" id="CHEBI:58349"/>
    </ligand>
</feature>
<feature type="binding site" evidence="1">
    <location>
        <position position="157"/>
    </location>
    <ligand>
        <name>NADP(+)</name>
        <dbReference type="ChEBI" id="CHEBI:58349"/>
    </ligand>
</feature>
<feature type="binding site" evidence="1">
    <location>
        <position position="214"/>
    </location>
    <ligand>
        <name>Mg(2+)</name>
        <dbReference type="ChEBI" id="CHEBI:18420"/>
        <label>1</label>
    </ligand>
</feature>
<feature type="binding site" evidence="1">
    <location>
        <position position="214"/>
    </location>
    <ligand>
        <name>Mg(2+)</name>
        <dbReference type="ChEBI" id="CHEBI:18420"/>
        <label>2</label>
    </ligand>
</feature>
<feature type="binding site" evidence="1">
    <location>
        <position position="218"/>
    </location>
    <ligand>
        <name>Mg(2+)</name>
        <dbReference type="ChEBI" id="CHEBI:18420"/>
        <label>1</label>
    </ligand>
</feature>
<feature type="binding site" evidence="1">
    <location>
        <position position="250"/>
    </location>
    <ligand>
        <name>Mg(2+)</name>
        <dbReference type="ChEBI" id="CHEBI:18420"/>
        <label>2</label>
    </ligand>
</feature>
<feature type="binding site" evidence="1">
    <location>
        <position position="254"/>
    </location>
    <ligand>
        <name>Mg(2+)</name>
        <dbReference type="ChEBI" id="CHEBI:18420"/>
        <label>2</label>
    </ligand>
</feature>
<feature type="binding site" evidence="1">
    <location>
        <position position="275"/>
    </location>
    <ligand>
        <name>substrate</name>
    </ligand>
</feature>
<proteinExistence type="inferred from homology"/>
<dbReference type="EC" id="1.1.1.86" evidence="1"/>
<dbReference type="EMBL" id="AM180088">
    <property type="protein sequence ID" value="CAJ52812.1"/>
    <property type="molecule type" value="Genomic_DNA"/>
</dbReference>
<dbReference type="RefSeq" id="WP_011571927.1">
    <property type="nucleotide sequence ID" value="NC_008212.1"/>
</dbReference>
<dbReference type="SMR" id="Q18GT4"/>
<dbReference type="STRING" id="362976.HQ_2704A"/>
<dbReference type="GeneID" id="4194157"/>
<dbReference type="KEGG" id="hwa:HQ_2704A"/>
<dbReference type="eggNOG" id="arCOG04465">
    <property type="taxonomic scope" value="Archaea"/>
</dbReference>
<dbReference type="HOGENOM" id="CLU_033821_0_1_2"/>
<dbReference type="UniPathway" id="UPA00047">
    <property type="reaction ID" value="UER00056"/>
</dbReference>
<dbReference type="UniPathway" id="UPA00049">
    <property type="reaction ID" value="UER00060"/>
</dbReference>
<dbReference type="Proteomes" id="UP000001975">
    <property type="component" value="Chromosome"/>
</dbReference>
<dbReference type="GO" id="GO:0005829">
    <property type="term" value="C:cytosol"/>
    <property type="evidence" value="ECO:0007669"/>
    <property type="project" value="TreeGrafter"/>
</dbReference>
<dbReference type="GO" id="GO:0004455">
    <property type="term" value="F:ketol-acid reductoisomerase activity"/>
    <property type="evidence" value="ECO:0007669"/>
    <property type="project" value="UniProtKB-UniRule"/>
</dbReference>
<dbReference type="GO" id="GO:0000287">
    <property type="term" value="F:magnesium ion binding"/>
    <property type="evidence" value="ECO:0007669"/>
    <property type="project" value="UniProtKB-UniRule"/>
</dbReference>
<dbReference type="GO" id="GO:0050661">
    <property type="term" value="F:NADP binding"/>
    <property type="evidence" value="ECO:0007669"/>
    <property type="project" value="InterPro"/>
</dbReference>
<dbReference type="GO" id="GO:0009097">
    <property type="term" value="P:isoleucine biosynthetic process"/>
    <property type="evidence" value="ECO:0007669"/>
    <property type="project" value="UniProtKB-UniRule"/>
</dbReference>
<dbReference type="GO" id="GO:0009099">
    <property type="term" value="P:L-valine biosynthetic process"/>
    <property type="evidence" value="ECO:0007669"/>
    <property type="project" value="UniProtKB-UniRule"/>
</dbReference>
<dbReference type="FunFam" id="3.40.50.720:FF:000023">
    <property type="entry name" value="Ketol-acid reductoisomerase (NADP(+))"/>
    <property type="match status" value="1"/>
</dbReference>
<dbReference type="Gene3D" id="6.10.240.10">
    <property type="match status" value="1"/>
</dbReference>
<dbReference type="Gene3D" id="3.40.50.720">
    <property type="entry name" value="NAD(P)-binding Rossmann-like Domain"/>
    <property type="match status" value="1"/>
</dbReference>
<dbReference type="HAMAP" id="MF_00435">
    <property type="entry name" value="IlvC"/>
    <property type="match status" value="1"/>
</dbReference>
<dbReference type="InterPro" id="IPR008927">
    <property type="entry name" value="6-PGluconate_DH-like_C_sf"/>
</dbReference>
<dbReference type="InterPro" id="IPR013023">
    <property type="entry name" value="KARI"/>
</dbReference>
<dbReference type="InterPro" id="IPR000506">
    <property type="entry name" value="KARI_C"/>
</dbReference>
<dbReference type="InterPro" id="IPR013116">
    <property type="entry name" value="KARI_N"/>
</dbReference>
<dbReference type="InterPro" id="IPR014359">
    <property type="entry name" value="KARI_prok"/>
</dbReference>
<dbReference type="InterPro" id="IPR036291">
    <property type="entry name" value="NAD(P)-bd_dom_sf"/>
</dbReference>
<dbReference type="NCBIfam" id="TIGR00465">
    <property type="entry name" value="ilvC"/>
    <property type="match status" value="1"/>
</dbReference>
<dbReference type="NCBIfam" id="NF004017">
    <property type="entry name" value="PRK05479.1"/>
    <property type="match status" value="1"/>
</dbReference>
<dbReference type="NCBIfam" id="NF009940">
    <property type="entry name" value="PRK13403.1"/>
    <property type="match status" value="1"/>
</dbReference>
<dbReference type="PANTHER" id="PTHR21371">
    <property type="entry name" value="KETOL-ACID REDUCTOISOMERASE, MITOCHONDRIAL"/>
    <property type="match status" value="1"/>
</dbReference>
<dbReference type="PANTHER" id="PTHR21371:SF1">
    <property type="entry name" value="KETOL-ACID REDUCTOISOMERASE, MITOCHONDRIAL"/>
    <property type="match status" value="1"/>
</dbReference>
<dbReference type="Pfam" id="PF01450">
    <property type="entry name" value="KARI_C"/>
    <property type="match status" value="1"/>
</dbReference>
<dbReference type="Pfam" id="PF07991">
    <property type="entry name" value="KARI_N"/>
    <property type="match status" value="1"/>
</dbReference>
<dbReference type="PIRSF" id="PIRSF000116">
    <property type="entry name" value="IlvC_gammaproteo"/>
    <property type="match status" value="1"/>
</dbReference>
<dbReference type="SUPFAM" id="SSF48179">
    <property type="entry name" value="6-phosphogluconate dehydrogenase C-terminal domain-like"/>
    <property type="match status" value="1"/>
</dbReference>
<dbReference type="SUPFAM" id="SSF51735">
    <property type="entry name" value="NAD(P)-binding Rossmann-fold domains"/>
    <property type="match status" value="1"/>
</dbReference>
<dbReference type="PROSITE" id="PS51851">
    <property type="entry name" value="KARI_C"/>
    <property type="match status" value="1"/>
</dbReference>
<dbReference type="PROSITE" id="PS51850">
    <property type="entry name" value="KARI_N"/>
    <property type="match status" value="1"/>
</dbReference>
<sequence>MTETKTQTETETDEEEGTDTDTALDTTIYYDDDADREYIDDKTVAVLGYGSQGHAHAQNLADSGIDVIVGLYEGSSSRDAARADGLRVETPATAADEADIVSVLVPDTVQPDVFEAIQDGLDAGDTLQFAHGFNIHYNQIQPPADVDVTMVAPKAPGHLVRRNYEAGEGTPGLVAVYQNTTGTARKEAVAYAHAIGCTRAGAIETTFREETETDLFGEQAVLCGGATALVKQGYETLVDAGYSPEMAYFECLNELKLIVDLMYEGGLSEMWNSVSDTAEYGGLTRGNQVIDESVREEMESILEGVQDGTFAREWISENQANRPSYTQLKAAEEAHEIEAVGEPLRDLFAWSDNEETNDESDVVSEPEAAADD</sequence>
<gene>
    <name evidence="1" type="primary">ilvC</name>
    <name type="ordered locus">HQ_2704A</name>
</gene>